<reference key="1">
    <citation type="journal article" date="2001" name="Proc. Natl. Acad. Sci. U.S.A.">
        <title>The complete genome of the crenarchaeon Sulfolobus solfataricus P2.</title>
        <authorList>
            <person name="She Q."/>
            <person name="Singh R.K."/>
            <person name="Confalonieri F."/>
            <person name="Zivanovic Y."/>
            <person name="Allard G."/>
            <person name="Awayez M.J."/>
            <person name="Chan-Weiher C.C.-Y."/>
            <person name="Clausen I.G."/>
            <person name="Curtis B.A."/>
            <person name="De Moors A."/>
            <person name="Erauso G."/>
            <person name="Fletcher C."/>
            <person name="Gordon P.M.K."/>
            <person name="Heikamp-de Jong I."/>
            <person name="Jeffries A.C."/>
            <person name="Kozera C.J."/>
            <person name="Medina N."/>
            <person name="Peng X."/>
            <person name="Thi-Ngoc H.P."/>
            <person name="Redder P."/>
            <person name="Schenk M.E."/>
            <person name="Theriault C."/>
            <person name="Tolstrup N."/>
            <person name="Charlebois R.L."/>
            <person name="Doolittle W.F."/>
            <person name="Duguet M."/>
            <person name="Gaasterland T."/>
            <person name="Garrett R.A."/>
            <person name="Ragan M.A."/>
            <person name="Sensen C.W."/>
            <person name="Van der Oost J."/>
        </authorList>
    </citation>
    <scope>NUCLEOTIDE SEQUENCE [LARGE SCALE GENOMIC DNA]</scope>
    <source>
        <strain>ATCC 35092 / DSM 1617 / JCM 11322 / P2</strain>
    </source>
</reference>
<protein>
    <recommendedName>
        <fullName evidence="1">Large ribosomal subunit protein eL40</fullName>
    </recommendedName>
    <alternativeName>
        <fullName evidence="2">50S ribosomal protein L40e</fullName>
    </alternativeName>
</protein>
<keyword id="KW-0002">3D-structure</keyword>
<keyword id="KW-1185">Reference proteome</keyword>
<keyword id="KW-0687">Ribonucleoprotein</keyword>
<keyword id="KW-0689">Ribosomal protein</keyword>
<feature type="chain" id="PRO_0000138790" description="Large ribosomal subunit protein eL40">
    <location>
        <begin position="1"/>
        <end position="56"/>
    </location>
</feature>
<feature type="turn" evidence="3">
    <location>
        <begin position="11"/>
        <end position="14"/>
    </location>
</feature>
<feature type="strand" evidence="3">
    <location>
        <begin position="20"/>
        <end position="22"/>
    </location>
</feature>
<feature type="turn" evidence="3">
    <location>
        <begin position="23"/>
        <end position="25"/>
    </location>
</feature>
<feature type="turn" evidence="3">
    <location>
        <begin position="37"/>
        <end position="39"/>
    </location>
</feature>
<feature type="strand" evidence="3">
    <location>
        <begin position="44"/>
        <end position="46"/>
    </location>
</feature>
<feature type="strand" evidence="3">
    <location>
        <begin position="52"/>
        <end position="54"/>
    </location>
</feature>
<gene>
    <name evidence="1" type="primary">rpl40e</name>
    <name type="ordered locus">SSO5336</name>
</gene>
<evidence type="ECO:0000255" key="1">
    <source>
        <dbReference type="HAMAP-Rule" id="MF_00788"/>
    </source>
</evidence>
<evidence type="ECO:0000305" key="2"/>
<evidence type="ECO:0007829" key="3">
    <source>
        <dbReference type="PDB" id="2AYJ"/>
    </source>
</evidence>
<proteinExistence type="evidence at protein level"/>
<organism>
    <name type="scientific">Saccharolobus solfataricus (strain ATCC 35092 / DSM 1617 / JCM 11322 / P2)</name>
    <name type="common">Sulfolobus solfataricus</name>
    <dbReference type="NCBI Taxonomy" id="273057"/>
    <lineage>
        <taxon>Archaea</taxon>
        <taxon>Thermoproteota</taxon>
        <taxon>Thermoprotei</taxon>
        <taxon>Sulfolobales</taxon>
        <taxon>Sulfolobaceae</taxon>
        <taxon>Saccharolobus</taxon>
    </lineage>
</organism>
<accession>Q980V5</accession>
<sequence>MPLTDPAKLQIVQQRVFLKKVCRKCGALNPIRATKCRRCHSTNLRLKKKELPTKKG</sequence>
<dbReference type="EMBL" id="AE006641">
    <property type="protein sequence ID" value="AAK40517.1"/>
    <property type="molecule type" value="Genomic_DNA"/>
</dbReference>
<dbReference type="PIR" id="F90157">
    <property type="entry name" value="F90157"/>
</dbReference>
<dbReference type="PDB" id="2AYJ">
    <property type="method" value="NMR"/>
    <property type="chains" value="A=1-56"/>
</dbReference>
<dbReference type="PDBsum" id="2AYJ"/>
<dbReference type="SMR" id="Q980V5"/>
<dbReference type="FunCoup" id="Q980V5">
    <property type="interactions" value="64"/>
</dbReference>
<dbReference type="STRING" id="273057.SSO5336"/>
<dbReference type="PaxDb" id="273057-SSO5336"/>
<dbReference type="DNASU" id="1453344"/>
<dbReference type="EnsemblBacteria" id="AAK40517">
    <property type="protein sequence ID" value="AAK40517"/>
    <property type="gene ID" value="SSO5336"/>
</dbReference>
<dbReference type="KEGG" id="sso:SSO5336"/>
<dbReference type="eggNOG" id="arCOG04049">
    <property type="taxonomic scope" value="Archaea"/>
</dbReference>
<dbReference type="HOGENOM" id="CLU_175093_1_0_2"/>
<dbReference type="InParanoid" id="Q980V5"/>
<dbReference type="PhylomeDB" id="Q980V5"/>
<dbReference type="EvolutionaryTrace" id="Q980V5"/>
<dbReference type="Proteomes" id="UP000001974">
    <property type="component" value="Chromosome"/>
</dbReference>
<dbReference type="GO" id="GO:1990904">
    <property type="term" value="C:ribonucleoprotein complex"/>
    <property type="evidence" value="ECO:0007669"/>
    <property type="project" value="UniProtKB-KW"/>
</dbReference>
<dbReference type="GO" id="GO:0005840">
    <property type="term" value="C:ribosome"/>
    <property type="evidence" value="ECO:0007669"/>
    <property type="project" value="UniProtKB-KW"/>
</dbReference>
<dbReference type="GO" id="GO:0003735">
    <property type="term" value="F:structural constituent of ribosome"/>
    <property type="evidence" value="ECO:0007669"/>
    <property type="project" value="InterPro"/>
</dbReference>
<dbReference type="GO" id="GO:0006412">
    <property type="term" value="P:translation"/>
    <property type="evidence" value="ECO:0007669"/>
    <property type="project" value="UniProtKB-UniRule"/>
</dbReference>
<dbReference type="Gene3D" id="4.10.1060.50">
    <property type="match status" value="1"/>
</dbReference>
<dbReference type="HAMAP" id="MF_00788">
    <property type="entry name" value="Ribosomal_eL40"/>
    <property type="match status" value="1"/>
</dbReference>
<dbReference type="InterPro" id="IPR023657">
    <property type="entry name" value="Ribosomal_eL40_arc"/>
</dbReference>
<dbReference type="InterPro" id="IPR001975">
    <property type="entry name" value="Ribosomal_eL40_dom"/>
</dbReference>
<dbReference type="InterPro" id="IPR038587">
    <property type="entry name" value="Ribosomal_eL40_sf"/>
</dbReference>
<dbReference type="InterPro" id="IPR011332">
    <property type="entry name" value="Ribosomal_zn-bd"/>
</dbReference>
<dbReference type="NCBIfam" id="NF003161">
    <property type="entry name" value="PRK04136.1"/>
    <property type="match status" value="1"/>
</dbReference>
<dbReference type="PANTHER" id="PTHR39649">
    <property type="entry name" value="50S RIBOSOMAL PROTEIN L40E"/>
    <property type="match status" value="1"/>
</dbReference>
<dbReference type="PANTHER" id="PTHR39649:SF1">
    <property type="entry name" value="LARGE RIBOSOMAL SUBUNIT PROTEIN EL40"/>
    <property type="match status" value="1"/>
</dbReference>
<dbReference type="Pfam" id="PF01020">
    <property type="entry name" value="Ribosomal_L40e"/>
    <property type="match status" value="1"/>
</dbReference>
<dbReference type="SMART" id="SM01377">
    <property type="entry name" value="Ribosomal_L40e"/>
    <property type="match status" value="1"/>
</dbReference>
<dbReference type="SUPFAM" id="SSF57829">
    <property type="entry name" value="Zn-binding ribosomal proteins"/>
    <property type="match status" value="1"/>
</dbReference>
<name>RL40_SACS2</name>
<comment type="similarity">
    <text evidence="1">Belongs to the eukaryotic ribosomal protein eL40 family.</text>
</comment>